<feature type="chain" id="PRO_0000435622" description="DNA topoisomerase 4 subunit B">
    <location>
        <begin position="1"/>
        <end position="685"/>
    </location>
</feature>
<feature type="domain" description="Toprim" evidence="2">
    <location>
        <begin position="426"/>
        <end position="540"/>
    </location>
</feature>
<feature type="region of interest" description="Disordered" evidence="3">
    <location>
        <begin position="389"/>
        <end position="427"/>
    </location>
</feature>
<feature type="region of interest" description="Disordered" evidence="3">
    <location>
        <begin position="644"/>
        <end position="685"/>
    </location>
</feature>
<feature type="compositionally biased region" description="Basic and acidic residues" evidence="3">
    <location>
        <begin position="389"/>
        <end position="400"/>
    </location>
</feature>
<feature type="compositionally biased region" description="Acidic residues" evidence="3">
    <location>
        <begin position="644"/>
        <end position="654"/>
    </location>
</feature>
<feature type="compositionally biased region" description="Acidic residues" evidence="3">
    <location>
        <begin position="673"/>
        <end position="685"/>
    </location>
</feature>
<feature type="binding site" evidence="2">
    <location>
        <position position="432"/>
    </location>
    <ligand>
        <name>Mg(2+)</name>
        <dbReference type="ChEBI" id="CHEBI:18420"/>
        <label>1</label>
        <note>catalytic</note>
    </ligand>
</feature>
<feature type="binding site" evidence="2">
    <location>
        <position position="505"/>
    </location>
    <ligand>
        <name>Mg(2+)</name>
        <dbReference type="ChEBI" id="CHEBI:18420"/>
        <label>1</label>
        <note>catalytic</note>
    </ligand>
</feature>
<feature type="binding site" evidence="2">
    <location>
        <position position="505"/>
    </location>
    <ligand>
        <name>Mg(2+)</name>
        <dbReference type="ChEBI" id="CHEBI:18420"/>
        <label>2</label>
    </ligand>
</feature>
<feature type="binding site" evidence="2">
    <location>
        <position position="507"/>
    </location>
    <ligand>
        <name>Mg(2+)</name>
        <dbReference type="ChEBI" id="CHEBI:18420"/>
        <label>2</label>
    </ligand>
</feature>
<feature type="site" description="Interaction with DNA" evidence="2">
    <location>
        <position position="457"/>
    </location>
</feature>
<feature type="site" description="Interaction with DNA" evidence="2">
    <location>
        <position position="460"/>
    </location>
</feature>
<feature type="helix" evidence="5">
    <location>
        <begin position="20"/>
        <end position="25"/>
    </location>
</feature>
<feature type="helix" evidence="5">
    <location>
        <begin position="28"/>
        <end position="31"/>
    </location>
</feature>
<feature type="helix" evidence="5">
    <location>
        <begin position="36"/>
        <end position="56"/>
    </location>
</feature>
<feature type="strand" evidence="5">
    <location>
        <begin position="60"/>
        <end position="66"/>
    </location>
</feature>
<feature type="strand" evidence="5">
    <location>
        <begin position="72"/>
        <end position="76"/>
    </location>
</feature>
<feature type="strand" evidence="5">
    <location>
        <begin position="89"/>
        <end position="91"/>
    </location>
</feature>
<feature type="helix" evidence="5">
    <location>
        <begin position="92"/>
        <end position="98"/>
    </location>
</feature>
<feature type="helix" evidence="5">
    <location>
        <begin position="122"/>
        <end position="127"/>
    </location>
</feature>
<feature type="strand" evidence="5">
    <location>
        <begin position="129"/>
        <end position="138"/>
    </location>
</feature>
<feature type="strand" evidence="5">
    <location>
        <begin position="141"/>
        <end position="148"/>
    </location>
</feature>
<feature type="turn" evidence="5">
    <location>
        <begin position="149"/>
        <end position="151"/>
    </location>
</feature>
<feature type="strand" evidence="5">
    <location>
        <begin position="152"/>
        <end position="162"/>
    </location>
</feature>
<feature type="strand" evidence="5">
    <location>
        <begin position="167"/>
        <end position="175"/>
    </location>
</feature>
<feature type="turn" evidence="5">
    <location>
        <begin position="177"/>
        <end position="179"/>
    </location>
</feature>
<feature type="helix" evidence="5">
    <location>
        <begin position="187"/>
        <end position="199"/>
    </location>
</feature>
<feature type="strand" evidence="5">
    <location>
        <begin position="205"/>
        <end position="210"/>
    </location>
</feature>
<feature type="strand" evidence="5">
    <location>
        <begin position="212"/>
        <end position="215"/>
    </location>
</feature>
<feature type="strand" evidence="5">
    <location>
        <begin position="217"/>
        <end position="221"/>
    </location>
</feature>
<sequence>MAKKINNEYNDASIQVLEGLEAVRKRPGMYIGSTDSRGLHHLVYEIVDNAVDEALSGYGNEINVTIQKDNSICVADSGRGMPTGMHASGIPTVEVIFTVLHAGGKFGQGGYKTSGGLHGVGASVVNALSKWLEVHIVRDGVEYMERFEDGGKPVGTLKKIGKTKKRNGTSVTFLPDDTIFSTTNFSYEILAERLRESAFLLKGVKITLTDERGEEPKEEVFHYEEGIKEFVAYLNEEKDTLTPVVYFSGAKEGIEVELAYQYNDGYSENVLSFVNNVRTKDGGTHEVGMKTSMTKAYNEYARKVGLLKEKDKNLEGSDFREGLAAVLSIRVPENLLQFEGQTKGKLGTPLARTVVDNVVGEQMGFYLQENSEMSQSLIRKAIKAREAREAARKAREESRNGKKRKKGESLLSGKLTPAQSRNPKKNELYLVEGDSAGGSAKQGRDRKFQAILPLRGKVINTEKAKMQDILKNEEINTMIYTIGAGVGPEFSIEDCNYDKIIIMTDADTDGAHIQVLLLTFFYRYMKPLIEAGKVYIALPPLYKVSKGTGKKSVIEYAWTDGELAEVIDKVGKGYMLQRYKGLGEMNAEQLWETTMDPETRTLIRVRIDDAAQAERRVTTLMGDKVEPRRKWIEQHVQFTLEEDGSILDRSEEDTSAPTGESLLDAEKTKEAEQTDDTEISLFDIE</sequence>
<protein>
    <recommendedName>
        <fullName evidence="1">DNA topoisomerase 4 subunit B</fullName>
        <ecNumber evidence="1">5.6.2.2</ecNumber>
    </recommendedName>
    <alternativeName>
        <fullName evidence="1">Topoisomerase IV subunit B</fullName>
    </alternativeName>
</protein>
<organism>
    <name type="scientific">Enterococcus faecalis (strain ATCC 700802 / V583)</name>
    <dbReference type="NCBI Taxonomy" id="226185"/>
    <lineage>
        <taxon>Bacteria</taxon>
        <taxon>Bacillati</taxon>
        <taxon>Bacillota</taxon>
        <taxon>Bacilli</taxon>
        <taxon>Lactobacillales</taxon>
        <taxon>Enterococcaceae</taxon>
        <taxon>Enterococcus</taxon>
    </lineage>
</organism>
<name>PARE_ENTFA</name>
<comment type="function">
    <text evidence="1 4">Topoisomerase IV is essential for chromosome segregation. It relaxes supercoiled DNA (PubMed:23352267). Performs the decatenation events required during the replication of a circular DNA molecule.</text>
</comment>
<comment type="catalytic activity">
    <reaction evidence="1">
        <text>ATP-dependent breakage, passage and rejoining of double-stranded DNA.</text>
        <dbReference type="EC" id="5.6.2.2"/>
    </reaction>
</comment>
<comment type="cofactor">
    <cofactor evidence="1">
        <name>Mg(2+)</name>
        <dbReference type="ChEBI" id="CHEBI:18420"/>
    </cofactor>
    <cofactor evidence="1">
        <name>Mn(2+)</name>
        <dbReference type="ChEBI" id="CHEBI:29035"/>
    </cofactor>
    <cofactor evidence="1">
        <name>Ca(2+)</name>
        <dbReference type="ChEBI" id="CHEBI:29108"/>
    </cofactor>
    <text evidence="1">Binds two Mg(2+) per subunit. The magnesium ions form salt bridges with both the protein and the DNA. Can also accept other divalent metal cations, such as Mn(2+) or Ca(2+).</text>
</comment>
<comment type="activity regulation">
    <text evidence="4">Pyrrolopyrimidines inhibit both GyrB and its paralog in topoisomerase IV (parE) (PubMed:23352267).</text>
</comment>
<comment type="subunit">
    <text evidence="1">Heterotetramer composed of ParC and ParE.</text>
</comment>
<comment type="similarity">
    <text evidence="1">Belongs to the type II topoisomerase family. ParE type 1 subfamily.</text>
</comment>
<accession>H7C794</accession>
<evidence type="ECO:0000255" key="1">
    <source>
        <dbReference type="HAMAP-Rule" id="MF_00938"/>
    </source>
</evidence>
<evidence type="ECO:0000255" key="2">
    <source>
        <dbReference type="PROSITE-ProRule" id="PRU00995"/>
    </source>
</evidence>
<evidence type="ECO:0000256" key="3">
    <source>
        <dbReference type="SAM" id="MobiDB-lite"/>
    </source>
</evidence>
<evidence type="ECO:0000269" key="4">
    <source>
    </source>
</evidence>
<evidence type="ECO:0007829" key="5">
    <source>
        <dbReference type="PDB" id="4HZ5"/>
    </source>
</evidence>
<dbReference type="EC" id="5.6.2.2" evidence="1"/>
<dbReference type="EMBL" id="AE016830">
    <property type="protein sequence ID" value="AAO81398.1"/>
    <property type="molecule type" value="Genomic_DNA"/>
</dbReference>
<dbReference type="RefSeq" id="NP_815328.1">
    <property type="nucleotide sequence ID" value="NC_004668.1"/>
</dbReference>
<dbReference type="RefSeq" id="WP_002381887.1">
    <property type="nucleotide sequence ID" value="NZ_KE136528.1"/>
</dbReference>
<dbReference type="PDB" id="4HZ5">
    <property type="method" value="X-ray"/>
    <property type="resolution" value="2.70 A"/>
    <property type="chains" value="A/B/C/D/E/F/G/H/J=19-225"/>
</dbReference>
<dbReference type="PDBsum" id="4HZ5"/>
<dbReference type="SMR" id="H7C794"/>
<dbReference type="STRING" id="226185.EF_1615"/>
<dbReference type="EnsemblBacteria" id="AAO81398">
    <property type="protein sequence ID" value="AAO81398"/>
    <property type="gene ID" value="EF_1615"/>
</dbReference>
<dbReference type="GeneID" id="60893917"/>
<dbReference type="KEGG" id="efa:EF1615"/>
<dbReference type="PATRIC" id="fig|226185.45.peg.1892"/>
<dbReference type="eggNOG" id="COG0187">
    <property type="taxonomic scope" value="Bacteria"/>
</dbReference>
<dbReference type="HOGENOM" id="CLU_006146_4_1_9"/>
<dbReference type="EvolutionaryTrace" id="H7C794"/>
<dbReference type="Proteomes" id="UP000001415">
    <property type="component" value="Chromosome"/>
</dbReference>
<dbReference type="GO" id="GO:0005694">
    <property type="term" value="C:chromosome"/>
    <property type="evidence" value="ECO:0007669"/>
    <property type="project" value="InterPro"/>
</dbReference>
<dbReference type="GO" id="GO:0005524">
    <property type="term" value="F:ATP binding"/>
    <property type="evidence" value="ECO:0007669"/>
    <property type="project" value="UniProtKB-UniRule"/>
</dbReference>
<dbReference type="GO" id="GO:0003677">
    <property type="term" value="F:DNA binding"/>
    <property type="evidence" value="ECO:0007669"/>
    <property type="project" value="UniProtKB-UniRule"/>
</dbReference>
<dbReference type="GO" id="GO:0034335">
    <property type="term" value="F:DNA negative supercoiling activity"/>
    <property type="evidence" value="ECO:0007669"/>
    <property type="project" value="UniProtKB-ARBA"/>
</dbReference>
<dbReference type="GO" id="GO:0046872">
    <property type="term" value="F:metal ion binding"/>
    <property type="evidence" value="ECO:0007669"/>
    <property type="project" value="UniProtKB-KW"/>
</dbReference>
<dbReference type="GO" id="GO:0007059">
    <property type="term" value="P:chromosome segregation"/>
    <property type="evidence" value="ECO:0007669"/>
    <property type="project" value="UniProtKB-UniRule"/>
</dbReference>
<dbReference type="GO" id="GO:0006265">
    <property type="term" value="P:DNA topological change"/>
    <property type="evidence" value="ECO:0007669"/>
    <property type="project" value="UniProtKB-UniRule"/>
</dbReference>
<dbReference type="CDD" id="cd16928">
    <property type="entry name" value="HATPase_GyrB-like"/>
    <property type="match status" value="1"/>
</dbReference>
<dbReference type="CDD" id="cd00822">
    <property type="entry name" value="TopoII_Trans_DNA_gyrase"/>
    <property type="match status" value="1"/>
</dbReference>
<dbReference type="FunFam" id="3.30.230.10:FF:000005">
    <property type="entry name" value="DNA gyrase subunit B"/>
    <property type="match status" value="1"/>
</dbReference>
<dbReference type="FunFam" id="3.30.565.10:FF:000002">
    <property type="entry name" value="DNA gyrase subunit B"/>
    <property type="match status" value="1"/>
</dbReference>
<dbReference type="FunFam" id="3.40.50.670:FF:000002">
    <property type="entry name" value="DNA gyrase subunit B"/>
    <property type="match status" value="1"/>
</dbReference>
<dbReference type="Gene3D" id="3.30.230.10">
    <property type="match status" value="1"/>
</dbReference>
<dbReference type="Gene3D" id="3.40.50.670">
    <property type="match status" value="1"/>
</dbReference>
<dbReference type="Gene3D" id="3.30.565.10">
    <property type="entry name" value="Histidine kinase-like ATPase, C-terminal domain"/>
    <property type="match status" value="1"/>
</dbReference>
<dbReference type="HAMAP" id="MF_00939">
    <property type="entry name" value="ParE_type2"/>
    <property type="match status" value="1"/>
</dbReference>
<dbReference type="InterPro" id="IPR002288">
    <property type="entry name" value="DNA_gyrase_B_C"/>
</dbReference>
<dbReference type="InterPro" id="IPR036890">
    <property type="entry name" value="HATPase_C_sf"/>
</dbReference>
<dbReference type="InterPro" id="IPR005740">
    <property type="entry name" value="ParE_type2"/>
</dbReference>
<dbReference type="InterPro" id="IPR020568">
    <property type="entry name" value="Ribosomal_Su5_D2-typ_SF"/>
</dbReference>
<dbReference type="InterPro" id="IPR014721">
    <property type="entry name" value="Ribsml_uS5_D2-typ_fold_subgr"/>
</dbReference>
<dbReference type="InterPro" id="IPR001241">
    <property type="entry name" value="Topo_IIA"/>
</dbReference>
<dbReference type="InterPro" id="IPR013760">
    <property type="entry name" value="Topo_IIA-like_dom_sf"/>
</dbReference>
<dbReference type="InterPro" id="IPR000565">
    <property type="entry name" value="Topo_IIA_B"/>
</dbReference>
<dbReference type="InterPro" id="IPR013759">
    <property type="entry name" value="Topo_IIA_B_C"/>
</dbReference>
<dbReference type="InterPro" id="IPR013506">
    <property type="entry name" value="Topo_IIA_bsu_dom2"/>
</dbReference>
<dbReference type="InterPro" id="IPR018522">
    <property type="entry name" value="TopoIIA_CS"/>
</dbReference>
<dbReference type="InterPro" id="IPR006171">
    <property type="entry name" value="TOPRIM_dom"/>
</dbReference>
<dbReference type="NCBIfam" id="TIGR01058">
    <property type="entry name" value="parE_Gpos"/>
    <property type="match status" value="1"/>
</dbReference>
<dbReference type="NCBIfam" id="NF004189">
    <property type="entry name" value="PRK05644.1"/>
    <property type="match status" value="1"/>
</dbReference>
<dbReference type="PANTHER" id="PTHR45866">
    <property type="entry name" value="DNA GYRASE/TOPOISOMERASE SUBUNIT B"/>
    <property type="match status" value="1"/>
</dbReference>
<dbReference type="PANTHER" id="PTHR45866:SF12">
    <property type="entry name" value="DNA TOPOISOMERASE 4 SUBUNIT B"/>
    <property type="match status" value="1"/>
</dbReference>
<dbReference type="Pfam" id="PF00204">
    <property type="entry name" value="DNA_gyraseB"/>
    <property type="match status" value="1"/>
</dbReference>
<dbReference type="Pfam" id="PF00986">
    <property type="entry name" value="DNA_gyraseB_C"/>
    <property type="match status" value="1"/>
</dbReference>
<dbReference type="Pfam" id="PF02518">
    <property type="entry name" value="HATPase_c"/>
    <property type="match status" value="1"/>
</dbReference>
<dbReference type="Pfam" id="PF01751">
    <property type="entry name" value="Toprim"/>
    <property type="match status" value="1"/>
</dbReference>
<dbReference type="PRINTS" id="PR01159">
    <property type="entry name" value="DNAGYRASEB"/>
</dbReference>
<dbReference type="PRINTS" id="PR00418">
    <property type="entry name" value="TPI2FAMILY"/>
</dbReference>
<dbReference type="SMART" id="SM00387">
    <property type="entry name" value="HATPase_c"/>
    <property type="match status" value="1"/>
</dbReference>
<dbReference type="SMART" id="SM00433">
    <property type="entry name" value="TOP2c"/>
    <property type="match status" value="1"/>
</dbReference>
<dbReference type="SUPFAM" id="SSF55874">
    <property type="entry name" value="ATPase domain of HSP90 chaperone/DNA topoisomerase II/histidine kinase"/>
    <property type="match status" value="1"/>
</dbReference>
<dbReference type="SUPFAM" id="SSF54211">
    <property type="entry name" value="Ribosomal protein S5 domain 2-like"/>
    <property type="match status" value="1"/>
</dbReference>
<dbReference type="SUPFAM" id="SSF56719">
    <property type="entry name" value="Type II DNA topoisomerase"/>
    <property type="match status" value="1"/>
</dbReference>
<dbReference type="PROSITE" id="PS00177">
    <property type="entry name" value="TOPOISOMERASE_II"/>
    <property type="match status" value="1"/>
</dbReference>
<dbReference type="PROSITE" id="PS50880">
    <property type="entry name" value="TOPRIM"/>
    <property type="match status" value="1"/>
</dbReference>
<keyword id="KW-0002">3D-structure</keyword>
<keyword id="KW-0238">DNA-binding</keyword>
<keyword id="KW-0413">Isomerase</keyword>
<keyword id="KW-0460">Magnesium</keyword>
<keyword id="KW-0479">Metal-binding</keyword>
<keyword id="KW-1185">Reference proteome</keyword>
<proteinExistence type="evidence at protein level"/>
<gene>
    <name evidence="1" type="primary">parE</name>
    <name type="ordered locus">EF_1615</name>
</gene>
<reference key="1">
    <citation type="journal article" date="2003" name="Science">
        <title>Role of mobile DNA in the evolution of vancomycin-resistant Enterococcus faecalis.</title>
        <authorList>
            <person name="Paulsen I.T."/>
            <person name="Banerjei L."/>
            <person name="Myers G.S.A."/>
            <person name="Nelson K.E."/>
            <person name="Seshadri R."/>
            <person name="Read T.D."/>
            <person name="Fouts D.E."/>
            <person name="Eisen J.A."/>
            <person name="Gill S.R."/>
            <person name="Heidelberg J.F."/>
            <person name="Tettelin H."/>
            <person name="Dodson R.J."/>
            <person name="Umayam L.A."/>
            <person name="Brinkac L.M."/>
            <person name="Beanan M.J."/>
            <person name="Daugherty S.C."/>
            <person name="DeBoy R.T."/>
            <person name="Durkin S.A."/>
            <person name="Kolonay J.F."/>
            <person name="Madupu R."/>
            <person name="Nelson W.C."/>
            <person name="Vamathevan J.J."/>
            <person name="Tran B."/>
            <person name="Upton J."/>
            <person name="Hansen T."/>
            <person name="Shetty J."/>
            <person name="Khouri H.M."/>
            <person name="Utterback T.R."/>
            <person name="Radune D."/>
            <person name="Ketchum K.A."/>
            <person name="Dougherty B.A."/>
            <person name="Fraser C.M."/>
        </authorList>
    </citation>
    <scope>NUCLEOTIDE SEQUENCE [LARGE SCALE GENOMIC DNA]</scope>
    <source>
        <strain>ATCC 700802 / V583</strain>
    </source>
</reference>
<reference key="2">
    <citation type="journal article" date="2013" name="Bioorg. Med. Chem. Lett.">
        <title>Pyrrolopyrimidine inhibitors of DNA gyrase B (GyrB) and topoisomerase IV (ParE). Part I: Structure guided discovery and optimization of dual targeting agents with potent, broad-spectrum enzymatic activity.</title>
        <authorList>
            <person name="Tari L.W."/>
            <person name="Trzoss M."/>
            <person name="Bensen D.C."/>
            <person name="Li X."/>
            <person name="Chen Z."/>
            <person name="Lam T."/>
            <person name="Zhang J."/>
            <person name="Creighton C.J."/>
            <person name="Cunningham M.L."/>
            <person name="Kwan B."/>
            <person name="Stidham M."/>
            <person name="Shaw K.J."/>
            <person name="Lightstone F.C."/>
            <person name="Wong S.E."/>
            <person name="Nguyen T.B."/>
            <person name="Nix J."/>
            <person name="Finn J."/>
        </authorList>
    </citation>
    <scope>X-RAY CRYSTALLOGRAPHY (2.70 ANGSTROMS) OF 19-225 IN COMPLEX WITH INHIBITOR</scope>
    <scope>FUNCTION</scope>
    <scope>ACTIVITY REGULATION</scope>
</reference>